<dbReference type="EC" id="1.3.-.-" evidence="1"/>
<dbReference type="EMBL" id="CP000678">
    <property type="protein sequence ID" value="ABQ87906.1"/>
    <property type="molecule type" value="Genomic_DNA"/>
</dbReference>
<dbReference type="RefSeq" id="WP_004033657.1">
    <property type="nucleotide sequence ID" value="NZ_CP117965.1"/>
</dbReference>
<dbReference type="SMR" id="A5UNX8"/>
<dbReference type="STRING" id="420247.Msm_1701"/>
<dbReference type="EnsemblBacteria" id="ABQ87906">
    <property type="protein sequence ID" value="ABQ87906"/>
    <property type="gene ID" value="Msm_1701"/>
</dbReference>
<dbReference type="KEGG" id="msi:Msm_1701"/>
<dbReference type="PATRIC" id="fig|420247.28.peg.1690"/>
<dbReference type="eggNOG" id="arCOG00570">
    <property type="taxonomic scope" value="Archaea"/>
</dbReference>
<dbReference type="HOGENOM" id="CLU_024648_0_0_2"/>
<dbReference type="BioCyc" id="MSMI420247:GHWZ-1743-MONOMER"/>
<dbReference type="UniPathway" id="UPA00940"/>
<dbReference type="Proteomes" id="UP000001992">
    <property type="component" value="Chromosome"/>
</dbReference>
<dbReference type="GO" id="GO:0016020">
    <property type="term" value="C:membrane"/>
    <property type="evidence" value="ECO:0007669"/>
    <property type="project" value="GOC"/>
</dbReference>
<dbReference type="GO" id="GO:0050660">
    <property type="term" value="F:flavin adenine dinucleotide binding"/>
    <property type="evidence" value="ECO:0007669"/>
    <property type="project" value="UniProtKB-UniRule"/>
</dbReference>
<dbReference type="GO" id="GO:0045550">
    <property type="term" value="F:geranylgeranyl reductase activity"/>
    <property type="evidence" value="ECO:0007669"/>
    <property type="project" value="InterPro"/>
</dbReference>
<dbReference type="GO" id="GO:0016628">
    <property type="term" value="F:oxidoreductase activity, acting on the CH-CH group of donors, NAD or NADP as acceptor"/>
    <property type="evidence" value="ECO:0007669"/>
    <property type="project" value="InterPro"/>
</dbReference>
<dbReference type="GO" id="GO:0046474">
    <property type="term" value="P:glycerophospholipid biosynthetic process"/>
    <property type="evidence" value="ECO:0007669"/>
    <property type="project" value="UniProtKB-UniRule"/>
</dbReference>
<dbReference type="GO" id="GO:0046467">
    <property type="term" value="P:membrane lipid biosynthetic process"/>
    <property type="evidence" value="ECO:0007669"/>
    <property type="project" value="InterPro"/>
</dbReference>
<dbReference type="Gene3D" id="3.30.9.10">
    <property type="entry name" value="D-Amino Acid Oxidase, subunit A, domain 2"/>
    <property type="match status" value="1"/>
</dbReference>
<dbReference type="Gene3D" id="3.50.50.60">
    <property type="entry name" value="FAD/NAD(P)-binding domain"/>
    <property type="match status" value="1"/>
</dbReference>
<dbReference type="HAMAP" id="MF_01287">
    <property type="entry name" value="DGGGPL_reductase"/>
    <property type="match status" value="1"/>
</dbReference>
<dbReference type="InterPro" id="IPR023590">
    <property type="entry name" value="DGGGPL_reductase"/>
</dbReference>
<dbReference type="InterPro" id="IPR036188">
    <property type="entry name" value="FAD/NAD-bd_sf"/>
</dbReference>
<dbReference type="InterPro" id="IPR011777">
    <property type="entry name" value="Geranylgeranyl_Rdtase_fam"/>
</dbReference>
<dbReference type="InterPro" id="IPR050407">
    <property type="entry name" value="Geranylgeranyl_reductase"/>
</dbReference>
<dbReference type="InterPro" id="IPR054715">
    <property type="entry name" value="GGR_cat"/>
</dbReference>
<dbReference type="NCBIfam" id="TIGR02032">
    <property type="entry name" value="GG-red-SF"/>
    <property type="match status" value="1"/>
</dbReference>
<dbReference type="PANTHER" id="PTHR42685:SF18">
    <property type="entry name" value="DIGERANYLGERANYLGLYCEROPHOSPHOLIPID REDUCTASE"/>
    <property type="match status" value="1"/>
</dbReference>
<dbReference type="PANTHER" id="PTHR42685">
    <property type="entry name" value="GERANYLGERANYL DIPHOSPHATE REDUCTASE"/>
    <property type="match status" value="1"/>
</dbReference>
<dbReference type="Pfam" id="PF12831">
    <property type="entry name" value="FAD_oxidored"/>
    <property type="match status" value="1"/>
</dbReference>
<dbReference type="Pfam" id="PF22578">
    <property type="entry name" value="GGR_cat"/>
    <property type="match status" value="1"/>
</dbReference>
<dbReference type="PRINTS" id="PR00420">
    <property type="entry name" value="RNGMNOXGNASE"/>
</dbReference>
<dbReference type="SUPFAM" id="SSF51905">
    <property type="entry name" value="FAD/NAD(P)-binding domain"/>
    <property type="match status" value="1"/>
</dbReference>
<evidence type="ECO:0000255" key="1">
    <source>
        <dbReference type="HAMAP-Rule" id="MF_01287"/>
    </source>
</evidence>
<keyword id="KW-0274">FAD</keyword>
<keyword id="KW-0285">Flavoprotein</keyword>
<keyword id="KW-0444">Lipid biosynthesis</keyword>
<keyword id="KW-0443">Lipid metabolism</keyword>
<keyword id="KW-0560">Oxidoreductase</keyword>
<keyword id="KW-0594">Phospholipid biosynthesis</keyword>
<keyword id="KW-1208">Phospholipid metabolism</keyword>
<name>GGR_METS3</name>
<protein>
    <recommendedName>
        <fullName evidence="1">Digeranylgeranylglycerophospholipid reductase</fullName>
        <shortName evidence="1">DGGGPL reductase</shortName>
        <ecNumber evidence="1">1.3.-.-</ecNumber>
    </recommendedName>
    <alternativeName>
        <fullName evidence="1">2,3-bis-O-geranylgeranylglyceryl phosphate reductase</fullName>
    </alternativeName>
    <alternativeName>
        <fullName evidence="1">Geranylgeranyl reductase</fullName>
        <shortName evidence="1">GGR</shortName>
    </alternativeName>
</protein>
<feature type="chain" id="PRO_0000351466" description="Digeranylgeranylglycerophospholipid reductase">
    <location>
        <begin position="1"/>
        <end position="393"/>
    </location>
</feature>
<feature type="binding site" evidence="1">
    <location>
        <position position="14"/>
    </location>
    <ligand>
        <name>FAD</name>
        <dbReference type="ChEBI" id="CHEBI:57692"/>
    </ligand>
</feature>
<feature type="binding site" evidence="1">
    <location>
        <position position="33"/>
    </location>
    <ligand>
        <name>FAD</name>
        <dbReference type="ChEBI" id="CHEBI:57692"/>
    </ligand>
</feature>
<feature type="binding site" evidence="1">
    <location>
        <position position="44"/>
    </location>
    <ligand>
        <name>FAD</name>
        <dbReference type="ChEBI" id="CHEBI:57692"/>
    </ligand>
</feature>
<feature type="binding site" evidence="1">
    <location>
        <position position="45"/>
    </location>
    <ligand>
        <name>FAD</name>
        <dbReference type="ChEBI" id="CHEBI:57692"/>
    </ligand>
</feature>
<feature type="binding site" evidence="1">
    <location>
        <position position="47"/>
    </location>
    <ligand>
        <name>FAD</name>
        <dbReference type="ChEBI" id="CHEBI:57692"/>
    </ligand>
</feature>
<feature type="binding site" evidence="1">
    <location>
        <position position="100"/>
    </location>
    <ligand>
        <name>FAD</name>
        <dbReference type="ChEBI" id="CHEBI:57692"/>
    </ligand>
</feature>
<feature type="binding site" evidence="1">
    <location>
        <position position="124"/>
    </location>
    <ligand>
        <name>FAD</name>
        <dbReference type="ChEBI" id="CHEBI:57692"/>
    </ligand>
</feature>
<feature type="binding site" evidence="1">
    <location>
        <position position="280"/>
    </location>
    <ligand>
        <name>FAD</name>
        <dbReference type="ChEBI" id="CHEBI:57692"/>
    </ligand>
</feature>
<feature type="binding site" evidence="1">
    <location>
        <position position="292"/>
    </location>
    <ligand>
        <name>FAD</name>
        <dbReference type="ChEBI" id="CHEBI:57692"/>
    </ligand>
</feature>
<feature type="binding site" evidence="1">
    <location>
        <position position="293"/>
    </location>
    <ligand>
        <name>FAD</name>
        <dbReference type="ChEBI" id="CHEBI:57692"/>
    </ligand>
</feature>
<organism>
    <name type="scientific">Methanobrevibacter smithii (strain ATCC 35061 / DSM 861 / OCM 144 / PS)</name>
    <dbReference type="NCBI Taxonomy" id="420247"/>
    <lineage>
        <taxon>Archaea</taxon>
        <taxon>Methanobacteriati</taxon>
        <taxon>Methanobacteriota</taxon>
        <taxon>Methanomada group</taxon>
        <taxon>Methanobacteria</taxon>
        <taxon>Methanobacteriales</taxon>
        <taxon>Methanobacteriaceae</taxon>
        <taxon>Methanobrevibacter</taxon>
    </lineage>
</organism>
<reference key="1">
    <citation type="journal article" date="2007" name="Proc. Natl. Acad. Sci. U.S.A.">
        <title>Genomic and metabolic adaptations of Methanobrevibacter smithii to the human gut.</title>
        <authorList>
            <person name="Samuel B.S."/>
            <person name="Hansen E.E."/>
            <person name="Manchester J.K."/>
            <person name="Coutinho P.M."/>
            <person name="Henrissat B."/>
            <person name="Fulton R."/>
            <person name="Latreille P."/>
            <person name="Kim K."/>
            <person name="Wilson R.K."/>
            <person name="Gordon J.I."/>
        </authorList>
    </citation>
    <scope>NUCLEOTIDE SEQUENCE [LARGE SCALE GENOMIC DNA]</scope>
    <source>
        <strain>ATCC 35061 / DSM 861 / OCM 144 / PS</strain>
    </source>
</reference>
<accession>A5UNX8</accession>
<gene>
    <name type="ordered locus">Msm_1701</name>
</gene>
<sequence length="393" mass="42289">MIETDVLVIGGGPAGSSAAKHAALGGAKVILLDKRSEIGAPKRCAEGVSKKGLAKLGIEPSPRWITKEIDGVRLTSPDGTDVWLTEEEIELPEAGYILERKVFDKHMAMDAARAGAEIRIKTLATGMDKIEDGFIVSTESMGKTEEIKAKIVIAADGPEGHVARWAGLKGSAKAKEMESGVQYEMVNVEFDREAVIEFYFGSCAPGGYVWIFPKGDDIANVGLAILQHKATKPAIEYLDDFIAKCPATKNAQAVELNVGGDPVGGMPKKMYDDNILVCGDAAGQVNPLTGGGIISGMTGGMYAGQVAAEAIKEGDHSKKFLKKYDKITRDDLSHEIDKYKKVQEYMLTLSDEELDNIAHAFQDVNFEKISTTELVKALVKVSPKALLKLGKFI</sequence>
<proteinExistence type="inferred from homology"/>
<comment type="function">
    <text evidence="1">Is involved in the reduction of 2,3-digeranylgeranylglycerophospholipids (unsaturated archaeols) into 2,3-diphytanylglycerophospholipids (saturated archaeols) in the biosynthesis of archaeal membrane lipids. Catalyzes the formation of archaetidic acid (2,3-di-O-phytanyl-sn-glyceryl phosphate) from 2,3-di-O-geranylgeranylglyceryl phosphate (DGGGP) via the hydrogenation of each double bond of the isoprenoid chains. Is also probably able to reduce double bonds of geranyl groups in CDP-2,3-bis-O-(geranylgeranyl)-sn-glycerol and archaetidylserine, thus acting at various stages in the biosynthesis of archaeal membrane lipids.</text>
</comment>
<comment type="catalytic activity">
    <reaction evidence="1">
        <text>a 2,3-bis-O-phytanyl-sn-glycerol 1-phospholipid + 8 A = a 2,3-bis-O-(geranylgeranyl)-sn-glycerol 1-phospholipid + 8 AH2</text>
        <dbReference type="Rhea" id="RHEA:64376"/>
        <dbReference type="ChEBI" id="CHEBI:13193"/>
        <dbReference type="ChEBI" id="CHEBI:17499"/>
        <dbReference type="ChEBI" id="CHEBI:138139"/>
        <dbReference type="ChEBI" id="CHEBI:138140"/>
    </reaction>
    <physiologicalReaction direction="right-to-left" evidence="1">
        <dbReference type="Rhea" id="RHEA:64378"/>
    </physiologicalReaction>
</comment>
<comment type="catalytic activity">
    <reaction evidence="1">
        <text>2,3-bis-O-(phytanyl)-sn-glycerol 1-phosphate + 8 A = 2,3-bis-O-(geranylgeranyl)-sn-glycerol 1-phosphate + 8 AH2</text>
        <dbReference type="Rhea" id="RHEA:64368"/>
        <dbReference type="ChEBI" id="CHEBI:13193"/>
        <dbReference type="ChEBI" id="CHEBI:17499"/>
        <dbReference type="ChEBI" id="CHEBI:58837"/>
        <dbReference type="ChEBI" id="CHEBI:73125"/>
    </reaction>
    <physiologicalReaction direction="right-to-left" evidence="1">
        <dbReference type="Rhea" id="RHEA:64370"/>
    </physiologicalReaction>
</comment>
<comment type="catalytic activity">
    <reaction evidence="1">
        <text>CDP-2,3-bis-O-(geranylgeranyl)-sn-glycerol + 8 AH2 = CDP-2,3-bis-O-(phytanyl)-sn-glycerol + 8 A</text>
        <dbReference type="Rhea" id="RHEA:84207"/>
        <dbReference type="ChEBI" id="CHEBI:13193"/>
        <dbReference type="ChEBI" id="CHEBI:17499"/>
        <dbReference type="ChEBI" id="CHEBI:58838"/>
        <dbReference type="ChEBI" id="CHEBI:74004"/>
    </reaction>
    <physiologicalReaction direction="left-to-right" evidence="1">
        <dbReference type="Rhea" id="RHEA:84208"/>
    </physiologicalReaction>
</comment>
<comment type="catalytic activity">
    <reaction evidence="1">
        <text>archaetidylserine + 8 AH2 = 2,3-bis-O-phytanyl-sn-glycero-3-phospho-L-serine + 8 A</text>
        <dbReference type="Rhea" id="RHEA:84215"/>
        <dbReference type="ChEBI" id="CHEBI:13193"/>
        <dbReference type="ChEBI" id="CHEBI:17499"/>
        <dbReference type="ChEBI" id="CHEBI:71517"/>
        <dbReference type="ChEBI" id="CHEBI:74853"/>
    </reaction>
    <physiologicalReaction direction="left-to-right" evidence="1">
        <dbReference type="Rhea" id="RHEA:84216"/>
    </physiologicalReaction>
</comment>
<comment type="cofactor">
    <cofactor evidence="1">
        <name>FAD</name>
        <dbReference type="ChEBI" id="CHEBI:57692"/>
    </cofactor>
    <text evidence="1">Binds 1 FAD per subunit.</text>
</comment>
<comment type="pathway">
    <text evidence="1">Membrane lipid metabolism; glycerophospholipid metabolism.</text>
</comment>
<comment type="miscellaneous">
    <text evidence="1">Reduction reaction proceeds via syn addition of hydrogen for double bonds.</text>
</comment>
<comment type="similarity">
    <text evidence="1">Belongs to the geranylgeranyl reductase family. DGGGPL reductase subfamily.</text>
</comment>